<accession>Q0VTI3</accession>
<evidence type="ECO:0000255" key="1">
    <source>
        <dbReference type="HAMAP-Rule" id="MF_00758"/>
    </source>
</evidence>
<protein>
    <recommendedName>
        <fullName evidence="1">UPF0301 protein ABO_0112</fullName>
    </recommendedName>
</protein>
<comment type="similarity">
    <text evidence="1">Belongs to the UPF0301 (AlgH) family.</text>
</comment>
<organism>
    <name type="scientific">Alcanivorax borkumensis (strain ATCC 700651 / DSM 11573 / NCIMB 13689 / SK2)</name>
    <dbReference type="NCBI Taxonomy" id="393595"/>
    <lineage>
        <taxon>Bacteria</taxon>
        <taxon>Pseudomonadati</taxon>
        <taxon>Pseudomonadota</taxon>
        <taxon>Gammaproteobacteria</taxon>
        <taxon>Oceanospirillales</taxon>
        <taxon>Alcanivoracaceae</taxon>
        <taxon>Alcanivorax</taxon>
    </lineage>
</organism>
<proteinExistence type="inferred from homology"/>
<gene>
    <name type="ordered locus">ABO_0112</name>
</gene>
<name>Y112_ALCBS</name>
<feature type="chain" id="PRO_0000258793" description="UPF0301 protein ABO_0112">
    <location>
        <begin position="1"/>
        <end position="188"/>
    </location>
</feature>
<sequence length="188" mass="20356">MSMENSPLKYQLLVAMPQMADPDFEHSVTYIVEHSSEGAMGLTLNRPVQISLGDILSDMDIEIEVPPSERHRVVAGGPVQQEAGFVLHSAATRWHASIPLSDGLILTTSRDILEAIAIGEGPEQSLICLGYAGWDAGQLEQELVDNAWLSTPASRELVLETPFEQTWHAAAARIGVDMSLIATQAGHC</sequence>
<reference key="1">
    <citation type="journal article" date="2006" name="Nat. Biotechnol.">
        <title>Genome sequence of the ubiquitous hydrocarbon-degrading marine bacterium Alcanivorax borkumensis.</title>
        <authorList>
            <person name="Schneiker S."/>
            <person name="Martins dos Santos V.A.P."/>
            <person name="Bartels D."/>
            <person name="Bekel T."/>
            <person name="Brecht M."/>
            <person name="Buhrmester J."/>
            <person name="Chernikova T.N."/>
            <person name="Denaro R."/>
            <person name="Ferrer M."/>
            <person name="Gertler C."/>
            <person name="Goesmann A."/>
            <person name="Golyshina O.V."/>
            <person name="Kaminski F."/>
            <person name="Khachane A.N."/>
            <person name="Lang S."/>
            <person name="Linke B."/>
            <person name="McHardy A.C."/>
            <person name="Meyer F."/>
            <person name="Nechitaylo T."/>
            <person name="Puehler A."/>
            <person name="Regenhardt D."/>
            <person name="Rupp O."/>
            <person name="Sabirova J.S."/>
            <person name="Selbitschka W."/>
            <person name="Yakimov M.M."/>
            <person name="Timmis K.N."/>
            <person name="Vorhoelter F.-J."/>
            <person name="Weidner S."/>
            <person name="Kaiser O."/>
            <person name="Golyshin P.N."/>
        </authorList>
    </citation>
    <scope>NUCLEOTIDE SEQUENCE [LARGE SCALE GENOMIC DNA]</scope>
    <source>
        <strain>ATCC 700651 / DSM 11573 / NCIMB 13689 / SK2</strain>
    </source>
</reference>
<dbReference type="EMBL" id="AM286690">
    <property type="protein sequence ID" value="CAL15560.1"/>
    <property type="molecule type" value="Genomic_DNA"/>
</dbReference>
<dbReference type="SMR" id="Q0VTI3"/>
<dbReference type="STRING" id="393595.ABO_0112"/>
<dbReference type="KEGG" id="abo:ABO_0112"/>
<dbReference type="eggNOG" id="COG1678">
    <property type="taxonomic scope" value="Bacteria"/>
</dbReference>
<dbReference type="HOGENOM" id="CLU_057596_1_0_6"/>
<dbReference type="Proteomes" id="UP000008871">
    <property type="component" value="Chromosome"/>
</dbReference>
<dbReference type="GO" id="GO:0005829">
    <property type="term" value="C:cytosol"/>
    <property type="evidence" value="ECO:0007669"/>
    <property type="project" value="TreeGrafter"/>
</dbReference>
<dbReference type="Gene3D" id="3.40.1740.10">
    <property type="entry name" value="VC0467-like"/>
    <property type="match status" value="1"/>
</dbReference>
<dbReference type="HAMAP" id="MF_00758">
    <property type="entry name" value="UPF0301"/>
    <property type="match status" value="1"/>
</dbReference>
<dbReference type="InterPro" id="IPR003774">
    <property type="entry name" value="AlgH-like"/>
</dbReference>
<dbReference type="NCBIfam" id="NF001266">
    <property type="entry name" value="PRK00228.1-1"/>
    <property type="match status" value="1"/>
</dbReference>
<dbReference type="PANTHER" id="PTHR30327">
    <property type="entry name" value="UNCHARACTERIZED PROTEIN YQGE"/>
    <property type="match status" value="1"/>
</dbReference>
<dbReference type="PANTHER" id="PTHR30327:SF1">
    <property type="entry name" value="UPF0301 PROTEIN YQGE"/>
    <property type="match status" value="1"/>
</dbReference>
<dbReference type="Pfam" id="PF02622">
    <property type="entry name" value="DUF179"/>
    <property type="match status" value="1"/>
</dbReference>
<dbReference type="SUPFAM" id="SSF143456">
    <property type="entry name" value="VC0467-like"/>
    <property type="match status" value="1"/>
</dbReference>
<keyword id="KW-1185">Reference proteome</keyword>